<dbReference type="EMBL" id="U87924">
    <property type="protein sequence ID" value="AAD12585.1"/>
    <property type="molecule type" value="Genomic_DNA"/>
</dbReference>
<dbReference type="RefSeq" id="WP_038192428.1">
    <property type="nucleotide sequence ID" value="NZ_JANAIF010000008.1"/>
</dbReference>
<dbReference type="SMR" id="P96185"/>
<dbReference type="GO" id="GO:0005829">
    <property type="term" value="C:cytosol"/>
    <property type="evidence" value="ECO:0007669"/>
    <property type="project" value="TreeGrafter"/>
</dbReference>
<dbReference type="GO" id="GO:0005524">
    <property type="term" value="F:ATP binding"/>
    <property type="evidence" value="ECO:0007669"/>
    <property type="project" value="UniProtKB-UniRule"/>
</dbReference>
<dbReference type="GO" id="GO:0016887">
    <property type="term" value="F:ATP hydrolysis activity"/>
    <property type="evidence" value="ECO:0007669"/>
    <property type="project" value="InterPro"/>
</dbReference>
<dbReference type="GO" id="GO:0140664">
    <property type="term" value="F:ATP-dependent DNA damage sensor activity"/>
    <property type="evidence" value="ECO:0007669"/>
    <property type="project" value="InterPro"/>
</dbReference>
<dbReference type="GO" id="GO:0003684">
    <property type="term" value="F:damaged DNA binding"/>
    <property type="evidence" value="ECO:0007669"/>
    <property type="project" value="UniProtKB-UniRule"/>
</dbReference>
<dbReference type="GO" id="GO:0003697">
    <property type="term" value="F:single-stranded DNA binding"/>
    <property type="evidence" value="ECO:0007669"/>
    <property type="project" value="UniProtKB-UniRule"/>
</dbReference>
<dbReference type="GO" id="GO:0006310">
    <property type="term" value="P:DNA recombination"/>
    <property type="evidence" value="ECO:0007669"/>
    <property type="project" value="UniProtKB-UniRule"/>
</dbReference>
<dbReference type="GO" id="GO:0006281">
    <property type="term" value="P:DNA repair"/>
    <property type="evidence" value="ECO:0007669"/>
    <property type="project" value="UniProtKB-UniRule"/>
</dbReference>
<dbReference type="GO" id="GO:0009432">
    <property type="term" value="P:SOS response"/>
    <property type="evidence" value="ECO:0007669"/>
    <property type="project" value="UniProtKB-UniRule"/>
</dbReference>
<dbReference type="CDD" id="cd00983">
    <property type="entry name" value="RecA"/>
    <property type="match status" value="1"/>
</dbReference>
<dbReference type="FunFam" id="3.40.50.300:FF:000087">
    <property type="entry name" value="Recombinase RecA"/>
    <property type="match status" value="1"/>
</dbReference>
<dbReference type="Gene3D" id="3.40.50.300">
    <property type="entry name" value="P-loop containing nucleotide triphosphate hydrolases"/>
    <property type="match status" value="1"/>
</dbReference>
<dbReference type="HAMAP" id="MF_00268">
    <property type="entry name" value="RecA"/>
    <property type="match status" value="1"/>
</dbReference>
<dbReference type="InterPro" id="IPR003593">
    <property type="entry name" value="AAA+_ATPase"/>
</dbReference>
<dbReference type="InterPro" id="IPR013765">
    <property type="entry name" value="DNA_recomb/repair_RecA"/>
</dbReference>
<dbReference type="InterPro" id="IPR020584">
    <property type="entry name" value="DNA_recomb/repair_RecA_CS"/>
</dbReference>
<dbReference type="InterPro" id="IPR027417">
    <property type="entry name" value="P-loop_NTPase"/>
</dbReference>
<dbReference type="InterPro" id="IPR049261">
    <property type="entry name" value="RecA-like_C"/>
</dbReference>
<dbReference type="InterPro" id="IPR049428">
    <property type="entry name" value="RecA-like_N"/>
</dbReference>
<dbReference type="InterPro" id="IPR020588">
    <property type="entry name" value="RecA_ATP-bd"/>
</dbReference>
<dbReference type="InterPro" id="IPR023400">
    <property type="entry name" value="RecA_C_sf"/>
</dbReference>
<dbReference type="InterPro" id="IPR020587">
    <property type="entry name" value="RecA_monomer-monomer_interface"/>
</dbReference>
<dbReference type="NCBIfam" id="TIGR02012">
    <property type="entry name" value="tigrfam_recA"/>
    <property type="match status" value="1"/>
</dbReference>
<dbReference type="PANTHER" id="PTHR45900:SF1">
    <property type="entry name" value="MITOCHONDRIAL DNA REPAIR PROTEIN RECA HOMOLOG-RELATED"/>
    <property type="match status" value="1"/>
</dbReference>
<dbReference type="PANTHER" id="PTHR45900">
    <property type="entry name" value="RECA"/>
    <property type="match status" value="1"/>
</dbReference>
<dbReference type="Pfam" id="PF00154">
    <property type="entry name" value="RecA"/>
    <property type="match status" value="1"/>
</dbReference>
<dbReference type="Pfam" id="PF21096">
    <property type="entry name" value="RecA_C"/>
    <property type="match status" value="1"/>
</dbReference>
<dbReference type="PRINTS" id="PR00142">
    <property type="entry name" value="RECA"/>
</dbReference>
<dbReference type="SMART" id="SM00382">
    <property type="entry name" value="AAA"/>
    <property type="match status" value="1"/>
</dbReference>
<dbReference type="SUPFAM" id="SSF52540">
    <property type="entry name" value="P-loop containing nucleoside triphosphate hydrolases"/>
    <property type="match status" value="1"/>
</dbReference>
<dbReference type="SUPFAM" id="SSF54752">
    <property type="entry name" value="RecA protein, C-terminal domain"/>
    <property type="match status" value="1"/>
</dbReference>
<dbReference type="PROSITE" id="PS00321">
    <property type="entry name" value="RECA_1"/>
    <property type="match status" value="1"/>
</dbReference>
<dbReference type="PROSITE" id="PS50162">
    <property type="entry name" value="RECA_2"/>
    <property type="match status" value="1"/>
</dbReference>
<dbReference type="PROSITE" id="PS50163">
    <property type="entry name" value="RECA_3"/>
    <property type="match status" value="1"/>
</dbReference>
<reference key="1">
    <citation type="submission" date="1999-02" db="EMBL/GenBank/DDBJ databases">
        <authorList>
            <person name="Pinyon R.A."/>
            <person name="Ormsby R."/>
            <person name="Ralston H."/>
            <person name="Thomas C.J."/>
        </authorList>
    </citation>
    <scope>NUCLEOTIDE SEQUENCE [GENOMIC DNA]</scope>
    <source>
        <strain>ATCC 35271 / DSM 4766 / UQM 2210 / ACM 2210 / T228/1</strain>
    </source>
</reference>
<sequence length="358" mass="38488">MANDENKQKALAAALGQIEKQFGKGSIMRLGENRSMDVETISTGSLSLDIALGAGGLPMGRIVEIYGPESSGKTTLTLQVIASAQREGKTCAFIDAEHALDPVYAKKLGVDIDNLLCSQPDTGEQALEICDALSRSGAVDVIVVDSVAALTPKAEIEGEIGDSHMGLAARMMSQAMRKLAGNLKNSNTLLIFINQIRMKIGVMFGNPETTTGGNALKFYASVRLDIRRTGSVKNGDEVVGSETRVKVVKNKIAAPFKQAEFQILYGEGINTFGELVDLGVKHKMVEKAGAWYSYNGDKIGQGKANATIYLKEHPEVSAELDKKLRELLLNNTGGFSSAVSDYVADYEDNGEEVKNEEF</sequence>
<comment type="function">
    <text evidence="1">Can catalyze the hydrolysis of ATP in the presence of single-stranded DNA, the ATP-dependent uptake of single-stranded DNA by duplex DNA, and the ATP-dependent hybridization of homologous single-stranded DNAs. It interacts with LexA causing its activation and leading to its autocatalytic cleavage.</text>
</comment>
<comment type="subcellular location">
    <subcellularLocation>
        <location evidence="1">Cytoplasm</location>
    </subcellularLocation>
</comment>
<comment type="similarity">
    <text evidence="1">Belongs to the RecA family.</text>
</comment>
<organism>
    <name type="scientific">Xenorhabdus bovienii</name>
    <name type="common">Xenorhabdus nematophila subsp. bovienii</name>
    <dbReference type="NCBI Taxonomy" id="40576"/>
    <lineage>
        <taxon>Bacteria</taxon>
        <taxon>Pseudomonadati</taxon>
        <taxon>Pseudomonadota</taxon>
        <taxon>Gammaproteobacteria</taxon>
        <taxon>Enterobacterales</taxon>
        <taxon>Morganellaceae</taxon>
        <taxon>Xenorhabdus</taxon>
    </lineage>
</organism>
<evidence type="ECO:0000255" key="1">
    <source>
        <dbReference type="HAMAP-Rule" id="MF_00268"/>
    </source>
</evidence>
<proteinExistence type="inferred from homology"/>
<protein>
    <recommendedName>
        <fullName evidence="1">Protein RecA</fullName>
    </recommendedName>
    <alternativeName>
        <fullName evidence="1">Recombinase A</fullName>
    </alternativeName>
</protein>
<name>RECA_XENBV</name>
<feature type="chain" id="PRO_0000122906" description="Protein RecA">
    <location>
        <begin position="1"/>
        <end position="358"/>
    </location>
</feature>
<feature type="binding site" evidence="1">
    <location>
        <begin position="67"/>
        <end position="74"/>
    </location>
    <ligand>
        <name>ATP</name>
        <dbReference type="ChEBI" id="CHEBI:30616"/>
    </ligand>
</feature>
<accession>P96185</accession>
<keyword id="KW-0067">ATP-binding</keyword>
<keyword id="KW-0963">Cytoplasm</keyword>
<keyword id="KW-0227">DNA damage</keyword>
<keyword id="KW-0233">DNA recombination</keyword>
<keyword id="KW-0234">DNA repair</keyword>
<keyword id="KW-0238">DNA-binding</keyword>
<keyword id="KW-0547">Nucleotide-binding</keyword>
<keyword id="KW-0742">SOS response</keyword>
<gene>
    <name evidence="1" type="primary">recA</name>
</gene>